<accession>Q8ILT4</accession>
<comment type="function">
    <text evidence="2">Protease that cleaves specifically after arginine or lysine residues.</text>
</comment>
<comment type="biophysicochemical properties">
    <phDependence>
        <text evidence="2">Optimum pH is 7.5. Has activity up to pH 9.5.</text>
    </phDependence>
    <temperatureDependence>
        <text evidence="2">Optimum temperature is 25 degrees Celsius.</text>
    </temperatureDependence>
</comment>
<comment type="developmental stage">
    <text evidence="2">Expressed during all parasite blood stages (at protein level).</text>
</comment>
<comment type="similarity">
    <text evidence="4">Belongs to the peptidase C14B family.</text>
</comment>
<comment type="caution">
    <text evidence="4 5">In contrast to other metacaspases of the peptidase C14B family, the catalytic histidine and cysteine residues do not appear to be conserved. Contains a serine residue at the position of the canonical catalytic cysteine which may constitute the active site.</text>
</comment>
<sequence>MVYNNGSLRGRKKIEEKYIPMNRKSTSLKDPSRTKNNNYIKTLDTYINEEDSPTKILSKGKKNKNENIKKRINEKDNDTDREDAASLNVDYNKNVMKKYNTRGTFIEKVSSSERNIEHNNNIIRKLGSKDYSKARVQTMTTNIGNHNALKKINPKVPSITSRTKSYTKVMNENKYNNNNSNNSNNNNINSMYYSKKLNNKKYSTEHTQSIDNNNITSKRLNNKKTATDKAQSTSRYCISNSVKKSYSTKGYNTDRSQTMSRYTLQNKKDSNTNTNRKGYSTHRGQIIQDNSNINNQAEKKKRNMSLKKKYIKESSNSTITGSNEKKNSNNILKKNSTCDLNYLNKEYNNNNNMHEHAENVYNINDNEGCSSMQIINDEDVQKNVPEFYTINLGSETKNMGENYIFKNRDKKIKPNIYNERNNMDLMEHKLNDDMSYNFADHIKDIECYINQLNESNKCNIYKECDPSKLISPVYDNVNDNILENNQQLNEYEKHNDILTTSYLKYYSHTNNNNHYYNDEDVHLDLGKTNEGFSNVVKNMDNIPWNETNKKESFSNIKKKIDHTDDRHIAYVDNSSMKHTMNDKDQYVKNVPYNNTMEEVLLLNEKRGNILGSLISKNHDAKRATSNNNNINNNKYYYYDNKYSEHGGDSVSSNIGYPHGYKNNNIYNYVNNIKDLSSPLYCNTKTKRAHKFHTDNIMSDQLNKYEDNNKNDGKFFSGNISSKQKGKNNLTNYTTHSSEYRIKSIESNLTKDYRKSLTYNDIPNFLDYNINNTNVQNSDFGDSHYINRNVSYKNSMNSNDDIQNSNNNNNNNNNNNMVNNPNEYLVYTNEKHYVRINNKLYEKTRDNTYIEVDSNSNFDIINDINSSHNSPLDNIKDNTLYHNTNKKEYSDYVSSYSNINKYEDINLPNNIHVSKDGKYLFKNYSVSQNVSDDNSVQDSFFSRTERSNSQNRYDKNGVNHIEQNYYNNSNRRDDIYYYHNQLKKLERLTQQNIKSGKYQRNIPQNDDNDHNDDDSEIKEVKKDKTKIDMNKHLHLNDKKIFNQVKRENTGVHMNASKTIKNMKEVTYRNINNDTNYNNNNVKINYLYSDELGKNKNRDTPLKTKQHGDSLDNKTELKKKIYNDIINNDIINNNIINNDIIKSGAINNNIVNNNLINNYNADNRNVSNSIFTQHINNINNNFYNSDDERINIIDNNKRMDMTKDESDRFRNNYFVELEKRKKNLGKTNNTTPISLSKNETINNMMINKRNFFNNYISDKVRDKILKREISCSVNTVCSSKTNNKTNSNYSSNNNNDNNNNNNNSNPFILDNSIRKSNIIITTSNNAKLINNTIISKGINNNILNINSNKNKSLNSAKINALGLLSSRNDLNYIMNNNRTSNNHINQHLLYNNRNYSVIKIPNVHKEKRSSKIPHNINIKSNLNLEPNIKTYTNIKTPINIKAYTNIKAPTNIKAPINIKASTNIKAPTNVKAPTNVKAPTNVKAPTNVNAPTNVNAPTNANAPTYVNTPTNIKRQEFSNVTLNYKGISKFDINEDKNTTIIPPLHRQSNSNFPFKNTKLNLNSDMYTEKELIKCKSINNSDIYNYLRNTYNKTPSKFYRTVSYRNMSLKKNKSMLENRKRKTEKKEENLMSTFNYTSEVDSKYIVKKAVVVGCNYVSEERSRLYGSVNDAYVFCRALVKYFDFLPENILLLTDSLPSNAYIYEDFDINRKKYINVDEEENIKNNEPLKKKNIFNLFNTNALYTTLKKTNEEELNCNSCKDVEIKNVDISSEKMNFNLWPTRVNILKAVNWLVRDSIPFGSYVFYFAGKSVQVDNMSGWEGEGYDEAFLCSDPFNKISEHNVITAVQLKDLLLSINESAQMTIILDCSGGQTILDPAGTENSLSYIKGCKQKGIWPITNPTNKVHKAIYDITILNNTSMKKYFCRSRYSKLIEVESTSAMIDPLLQSISSLPVAPKAYCLCAATWEQISIEGLFPIIEFARVSQLKKPESYKTGEGHYQNMNKKNIRAEKSNRNGPNGLINKNNNLSKKTNYEKNFNFTLNMMKMLFSNTNNNENKLDEKEKINRLGFNENDSDYIDDNYNSDDNNNNNYYYNYDGEKGFKNFQENLNNVGQKDVIKNKKFKDNYILVSHGVFTYCLIEAIIEFKEKELKYNILEKKNEQFIPMTLKNLINVIQQKMQNIKYNKLKKINQKPEFTIHPGANATNNNYFVHYSKNIHFQNYKCNFINADLSPFLNVNKAWEEINRTTLRNRKSLSLSSTLINTASSKYFTQKNEQFKNSYSLKY</sequence>
<keyword id="KW-0378">Hydrolase</keyword>
<keyword id="KW-0645">Protease</keyword>
<keyword id="KW-1185">Reference proteome</keyword>
<reference evidence="7" key="1">
    <citation type="journal article" date="2002" name="Nature">
        <title>Genome sequence of the human malaria parasite Plasmodium falciparum.</title>
        <authorList>
            <person name="Gardner M.J."/>
            <person name="Hall N."/>
            <person name="Fung E."/>
            <person name="White O."/>
            <person name="Berriman M."/>
            <person name="Hyman R.W."/>
            <person name="Carlton J.M."/>
            <person name="Pain A."/>
            <person name="Nelson K.E."/>
            <person name="Bowman S."/>
            <person name="Paulsen I.T."/>
            <person name="James K.D."/>
            <person name="Eisen J.A."/>
            <person name="Rutherford K.M."/>
            <person name="Salzberg S.L."/>
            <person name="Craig A."/>
            <person name="Kyes S."/>
            <person name="Chan M.-S."/>
            <person name="Nene V."/>
            <person name="Shallom S.J."/>
            <person name="Suh B."/>
            <person name="Peterson J."/>
            <person name="Angiuoli S."/>
            <person name="Pertea M."/>
            <person name="Allen J."/>
            <person name="Selengut J."/>
            <person name="Haft D."/>
            <person name="Mather M.W."/>
            <person name="Vaidya A.B."/>
            <person name="Martin D.M.A."/>
            <person name="Fairlamb A.H."/>
            <person name="Fraunholz M.J."/>
            <person name="Roos D.S."/>
            <person name="Ralph S.A."/>
            <person name="McFadden G.I."/>
            <person name="Cummings L.M."/>
            <person name="Subramanian G.M."/>
            <person name="Mungall C."/>
            <person name="Venter J.C."/>
            <person name="Carucci D.J."/>
            <person name="Hoffman S.L."/>
            <person name="Newbold C."/>
            <person name="Davis R.W."/>
            <person name="Fraser C.M."/>
            <person name="Barrell B.G."/>
        </authorList>
    </citation>
    <scope>NUCLEOTIDE SEQUENCE [LARGE SCALE GENOMIC DNA]</scope>
    <source>
        <strain evidence="7">3D7</strain>
    </source>
</reference>
<reference evidence="4" key="2">
    <citation type="journal article" date="2019" name="Int. J. Biol. Macromol.">
        <title>Metacaspase-3 of Plasmodium falciparum: An atypical trypsin-like serine protease.</title>
        <authorList>
            <person name="Kumar B."/>
            <person name="Verma S."/>
            <person name="Kashif M."/>
            <person name="Sharma R."/>
            <person name="Atul X."/>
            <person name="Dixit R."/>
            <person name="Singh A.P."/>
            <person name="Pande V."/>
            <person name="Saxena A.K."/>
            <person name="Abid M."/>
            <person name="Pandey K.C."/>
        </authorList>
    </citation>
    <scope>FUNCTION</scope>
    <scope>CATALYTIC ACTIVITY</scope>
    <scope>BIOPHYSICOCHEMICAL PROPERTIES</scope>
    <scope>DEVELOPMENTAL STAGE</scope>
</reference>
<name>MCA3_PLAF7</name>
<protein>
    <recommendedName>
        <fullName evidence="3">Metacaspase-3</fullName>
        <ecNumber evidence="2">3.4.22.-</ecNumber>
    </recommendedName>
    <alternativeName>
        <fullName evidence="3">PfMCA3</fullName>
    </alternativeName>
</protein>
<dbReference type="EC" id="3.4.22.-" evidence="2"/>
<dbReference type="EMBL" id="LN999946">
    <property type="protein sequence ID" value="CZT99873.1"/>
    <property type="molecule type" value="Genomic_DNA"/>
</dbReference>
<dbReference type="RefSeq" id="XP_001348333.1">
    <property type="nucleotide sequence ID" value="XM_001348297.1"/>
</dbReference>
<dbReference type="STRING" id="36329.Q8ILT4"/>
<dbReference type="PaxDb" id="5833-PF14_0160"/>
<dbReference type="EnsemblProtists" id="CZT99873">
    <property type="protein sequence ID" value="CZT99873"/>
    <property type="gene ID" value="PF3D7_1416200"/>
</dbReference>
<dbReference type="GeneID" id="811741"/>
<dbReference type="KEGG" id="pfa:PF3D7_1416200"/>
<dbReference type="VEuPathDB" id="PlasmoDB:PF3D7_1416200"/>
<dbReference type="HOGENOM" id="CLU_230367_0_0_1"/>
<dbReference type="InParanoid" id="Q8ILT4"/>
<dbReference type="OMA" id="TYKCKCT"/>
<dbReference type="OrthoDB" id="3223806at2759"/>
<dbReference type="Proteomes" id="UP000001450">
    <property type="component" value="Chromosome 14"/>
</dbReference>
<dbReference type="GO" id="GO:0008236">
    <property type="term" value="F:serine-type peptidase activity"/>
    <property type="evidence" value="ECO:0000314"/>
    <property type="project" value="UniProtKB"/>
</dbReference>
<dbReference type="GO" id="GO:0006508">
    <property type="term" value="P:proteolysis"/>
    <property type="evidence" value="ECO:0000314"/>
    <property type="project" value="UniProtKB"/>
</dbReference>
<dbReference type="Gene3D" id="3.40.50.12660">
    <property type="match status" value="2"/>
</dbReference>
<dbReference type="InterPro" id="IPR050452">
    <property type="entry name" value="Metacaspase"/>
</dbReference>
<dbReference type="PANTHER" id="PTHR48104:SF30">
    <property type="entry name" value="METACASPASE-1"/>
    <property type="match status" value="1"/>
</dbReference>
<dbReference type="PANTHER" id="PTHR48104">
    <property type="entry name" value="METACASPASE-4"/>
    <property type="match status" value="1"/>
</dbReference>
<organism evidence="7">
    <name type="scientific">Plasmodium falciparum (isolate 3D7)</name>
    <dbReference type="NCBI Taxonomy" id="36329"/>
    <lineage>
        <taxon>Eukaryota</taxon>
        <taxon>Sar</taxon>
        <taxon>Alveolata</taxon>
        <taxon>Apicomplexa</taxon>
        <taxon>Aconoidasida</taxon>
        <taxon>Haemosporida</taxon>
        <taxon>Plasmodiidae</taxon>
        <taxon>Plasmodium</taxon>
        <taxon>Plasmodium (Laverania)</taxon>
    </lineage>
</organism>
<feature type="chain" id="PRO_0000451189" description="Metacaspase-3">
    <location>
        <begin position="1"/>
        <end position="2280"/>
    </location>
</feature>
<feature type="region of interest" description="Disordered" evidence="1">
    <location>
        <begin position="56"/>
        <end position="83"/>
    </location>
</feature>
<feature type="region of interest" description="Disordered" evidence="1">
    <location>
        <begin position="202"/>
        <end position="284"/>
    </location>
</feature>
<feature type="region of interest" description="Disordered" evidence="1">
    <location>
        <begin position="791"/>
        <end position="819"/>
    </location>
</feature>
<feature type="region of interest" description="Disordered" evidence="1">
    <location>
        <begin position="931"/>
        <end position="954"/>
    </location>
</feature>
<feature type="region of interest" description="Disordered" evidence="1">
    <location>
        <begin position="994"/>
        <end position="1015"/>
    </location>
</feature>
<feature type="region of interest" description="Disordered" evidence="1">
    <location>
        <begin position="1278"/>
        <end position="1306"/>
    </location>
</feature>
<feature type="region of interest" description="Disordered" evidence="1">
    <location>
        <begin position="1469"/>
        <end position="1500"/>
    </location>
</feature>
<feature type="compositionally biased region" description="Basic and acidic residues" evidence="1">
    <location>
        <begin position="63"/>
        <end position="83"/>
    </location>
</feature>
<feature type="compositionally biased region" description="Polar residues" evidence="1">
    <location>
        <begin position="205"/>
        <end position="219"/>
    </location>
</feature>
<feature type="compositionally biased region" description="Polar residues" evidence="1">
    <location>
        <begin position="228"/>
        <end position="278"/>
    </location>
</feature>
<feature type="compositionally biased region" description="Low complexity" evidence="1">
    <location>
        <begin position="793"/>
        <end position="819"/>
    </location>
</feature>
<feature type="compositionally biased region" description="Low complexity" evidence="1">
    <location>
        <begin position="931"/>
        <end position="941"/>
    </location>
</feature>
<feature type="compositionally biased region" description="Low complexity" evidence="1">
    <location>
        <begin position="1278"/>
        <end position="1303"/>
    </location>
</feature>
<feature type="compositionally biased region" description="Low complexity" evidence="1">
    <location>
        <begin position="1482"/>
        <end position="1500"/>
    </location>
</feature>
<feature type="site" description="Important for catalytic activity" evidence="2">
    <location>
        <position position="1865"/>
    </location>
</feature>
<gene>
    <name evidence="3" type="primary">MCA3</name>
    <name evidence="6" type="ORF">PF3D7_1416200</name>
</gene>
<proteinExistence type="evidence at protein level"/>
<evidence type="ECO:0000256" key="1">
    <source>
        <dbReference type="SAM" id="MobiDB-lite"/>
    </source>
</evidence>
<evidence type="ECO:0000269" key="2">
    <source>
    </source>
</evidence>
<evidence type="ECO:0000303" key="3">
    <source>
    </source>
</evidence>
<evidence type="ECO:0000305" key="4"/>
<evidence type="ECO:0000305" key="5">
    <source>
    </source>
</evidence>
<evidence type="ECO:0000312" key="6">
    <source>
        <dbReference type="EMBL" id="CZT99873.1"/>
    </source>
</evidence>
<evidence type="ECO:0000312" key="7">
    <source>
        <dbReference type="Proteomes" id="UP000001450"/>
    </source>
</evidence>